<proteinExistence type="inferred from homology"/>
<feature type="chain" id="PRO_1000071177" description="Elongation factor 4">
    <location>
        <begin position="1"/>
        <end position="596"/>
    </location>
</feature>
<feature type="domain" description="tr-type G">
    <location>
        <begin position="2"/>
        <end position="183"/>
    </location>
</feature>
<feature type="binding site" evidence="1">
    <location>
        <begin position="14"/>
        <end position="19"/>
    </location>
    <ligand>
        <name>GTP</name>
        <dbReference type="ChEBI" id="CHEBI:37565"/>
    </ligand>
</feature>
<feature type="binding site" evidence="1">
    <location>
        <begin position="130"/>
        <end position="133"/>
    </location>
    <ligand>
        <name>GTP</name>
        <dbReference type="ChEBI" id="CHEBI:37565"/>
    </ligand>
</feature>
<reference key="1">
    <citation type="submission" date="2007-10" db="EMBL/GenBank/DDBJ databases">
        <title>Genome sequence of Campylobacter concisus 13826 isolated from human feces.</title>
        <authorList>
            <person name="Fouts D.E."/>
            <person name="Mongodin E.F."/>
            <person name="Puiu D."/>
            <person name="Sebastian Y."/>
            <person name="Miller W.G."/>
            <person name="Mandrell R.E."/>
            <person name="On S."/>
            <person name="Nelson K.E."/>
        </authorList>
    </citation>
    <scope>NUCLEOTIDE SEQUENCE [LARGE SCALE GENOMIC DNA]</scope>
    <source>
        <strain>13826</strain>
    </source>
</reference>
<dbReference type="EC" id="3.6.5.n1" evidence="1"/>
<dbReference type="EMBL" id="CP000792">
    <property type="protein sequence ID" value="EAT98035.1"/>
    <property type="molecule type" value="Genomic_DNA"/>
</dbReference>
<dbReference type="RefSeq" id="WP_004317620.1">
    <property type="nucleotide sequence ID" value="NC_009802.2"/>
</dbReference>
<dbReference type="SMR" id="A7ZCJ3"/>
<dbReference type="STRING" id="360104.CCC13826_0855"/>
<dbReference type="KEGG" id="cco:CCC13826_0855"/>
<dbReference type="eggNOG" id="COG0481">
    <property type="taxonomic scope" value="Bacteria"/>
</dbReference>
<dbReference type="HOGENOM" id="CLU_009995_3_3_7"/>
<dbReference type="OrthoDB" id="9801472at2"/>
<dbReference type="Proteomes" id="UP000001121">
    <property type="component" value="Chromosome"/>
</dbReference>
<dbReference type="GO" id="GO:0005886">
    <property type="term" value="C:plasma membrane"/>
    <property type="evidence" value="ECO:0007669"/>
    <property type="project" value="UniProtKB-SubCell"/>
</dbReference>
<dbReference type="GO" id="GO:0005525">
    <property type="term" value="F:GTP binding"/>
    <property type="evidence" value="ECO:0007669"/>
    <property type="project" value="UniProtKB-UniRule"/>
</dbReference>
<dbReference type="GO" id="GO:0003924">
    <property type="term" value="F:GTPase activity"/>
    <property type="evidence" value="ECO:0007669"/>
    <property type="project" value="UniProtKB-UniRule"/>
</dbReference>
<dbReference type="GO" id="GO:0043022">
    <property type="term" value="F:ribosome binding"/>
    <property type="evidence" value="ECO:0007669"/>
    <property type="project" value="UniProtKB-UniRule"/>
</dbReference>
<dbReference type="GO" id="GO:0003746">
    <property type="term" value="F:translation elongation factor activity"/>
    <property type="evidence" value="ECO:0007669"/>
    <property type="project" value="UniProtKB-UniRule"/>
</dbReference>
<dbReference type="GO" id="GO:0045727">
    <property type="term" value="P:positive regulation of translation"/>
    <property type="evidence" value="ECO:0007669"/>
    <property type="project" value="UniProtKB-UniRule"/>
</dbReference>
<dbReference type="CDD" id="cd03699">
    <property type="entry name" value="EF4_II"/>
    <property type="match status" value="1"/>
</dbReference>
<dbReference type="CDD" id="cd16260">
    <property type="entry name" value="EF4_III"/>
    <property type="match status" value="1"/>
</dbReference>
<dbReference type="CDD" id="cd01890">
    <property type="entry name" value="LepA"/>
    <property type="match status" value="1"/>
</dbReference>
<dbReference type="CDD" id="cd03709">
    <property type="entry name" value="lepA_C"/>
    <property type="match status" value="1"/>
</dbReference>
<dbReference type="FunFam" id="3.40.50.300:FF:000078">
    <property type="entry name" value="Elongation factor 4"/>
    <property type="match status" value="1"/>
</dbReference>
<dbReference type="FunFam" id="2.40.30.10:FF:000015">
    <property type="entry name" value="Translation factor GUF1, mitochondrial"/>
    <property type="match status" value="1"/>
</dbReference>
<dbReference type="FunFam" id="3.30.70.240:FF:000007">
    <property type="entry name" value="Translation factor GUF1, mitochondrial"/>
    <property type="match status" value="1"/>
</dbReference>
<dbReference type="FunFam" id="3.30.70.2570:FF:000001">
    <property type="entry name" value="Translation factor GUF1, mitochondrial"/>
    <property type="match status" value="1"/>
</dbReference>
<dbReference type="FunFam" id="3.30.70.870:FF:000004">
    <property type="entry name" value="Translation factor GUF1, mitochondrial"/>
    <property type="match status" value="1"/>
</dbReference>
<dbReference type="Gene3D" id="3.30.70.240">
    <property type="match status" value="1"/>
</dbReference>
<dbReference type="Gene3D" id="3.30.70.2570">
    <property type="entry name" value="Elongation factor 4, C-terminal domain"/>
    <property type="match status" value="1"/>
</dbReference>
<dbReference type="Gene3D" id="3.30.70.870">
    <property type="entry name" value="Elongation Factor G (Translational Gtpase), domain 3"/>
    <property type="match status" value="1"/>
</dbReference>
<dbReference type="Gene3D" id="3.40.50.300">
    <property type="entry name" value="P-loop containing nucleotide triphosphate hydrolases"/>
    <property type="match status" value="1"/>
</dbReference>
<dbReference type="Gene3D" id="2.40.30.10">
    <property type="entry name" value="Translation factors"/>
    <property type="match status" value="1"/>
</dbReference>
<dbReference type="HAMAP" id="MF_00071">
    <property type="entry name" value="LepA"/>
    <property type="match status" value="1"/>
</dbReference>
<dbReference type="InterPro" id="IPR006297">
    <property type="entry name" value="EF-4"/>
</dbReference>
<dbReference type="InterPro" id="IPR035647">
    <property type="entry name" value="EFG_III/V"/>
</dbReference>
<dbReference type="InterPro" id="IPR000640">
    <property type="entry name" value="EFG_V-like"/>
</dbReference>
<dbReference type="InterPro" id="IPR004161">
    <property type="entry name" value="EFTu-like_2"/>
</dbReference>
<dbReference type="InterPro" id="IPR031157">
    <property type="entry name" value="G_TR_CS"/>
</dbReference>
<dbReference type="InterPro" id="IPR038363">
    <property type="entry name" value="LepA_C_sf"/>
</dbReference>
<dbReference type="InterPro" id="IPR013842">
    <property type="entry name" value="LepA_CTD"/>
</dbReference>
<dbReference type="InterPro" id="IPR035654">
    <property type="entry name" value="LepA_IV"/>
</dbReference>
<dbReference type="InterPro" id="IPR027417">
    <property type="entry name" value="P-loop_NTPase"/>
</dbReference>
<dbReference type="InterPro" id="IPR005225">
    <property type="entry name" value="Small_GTP-bd"/>
</dbReference>
<dbReference type="InterPro" id="IPR000795">
    <property type="entry name" value="T_Tr_GTP-bd_dom"/>
</dbReference>
<dbReference type="NCBIfam" id="TIGR01393">
    <property type="entry name" value="lepA"/>
    <property type="match status" value="1"/>
</dbReference>
<dbReference type="NCBIfam" id="TIGR00231">
    <property type="entry name" value="small_GTP"/>
    <property type="match status" value="1"/>
</dbReference>
<dbReference type="PANTHER" id="PTHR43512:SF4">
    <property type="entry name" value="TRANSLATION FACTOR GUF1 HOMOLOG, CHLOROPLASTIC"/>
    <property type="match status" value="1"/>
</dbReference>
<dbReference type="PANTHER" id="PTHR43512">
    <property type="entry name" value="TRANSLATION FACTOR GUF1-RELATED"/>
    <property type="match status" value="1"/>
</dbReference>
<dbReference type="Pfam" id="PF00679">
    <property type="entry name" value="EFG_C"/>
    <property type="match status" value="1"/>
</dbReference>
<dbReference type="Pfam" id="PF00009">
    <property type="entry name" value="GTP_EFTU"/>
    <property type="match status" value="1"/>
</dbReference>
<dbReference type="Pfam" id="PF03144">
    <property type="entry name" value="GTP_EFTU_D2"/>
    <property type="match status" value="1"/>
</dbReference>
<dbReference type="Pfam" id="PF06421">
    <property type="entry name" value="LepA_C"/>
    <property type="match status" value="1"/>
</dbReference>
<dbReference type="PRINTS" id="PR00315">
    <property type="entry name" value="ELONGATNFCT"/>
</dbReference>
<dbReference type="SMART" id="SM00838">
    <property type="entry name" value="EFG_C"/>
    <property type="match status" value="1"/>
</dbReference>
<dbReference type="SUPFAM" id="SSF54980">
    <property type="entry name" value="EF-G C-terminal domain-like"/>
    <property type="match status" value="2"/>
</dbReference>
<dbReference type="SUPFAM" id="SSF52540">
    <property type="entry name" value="P-loop containing nucleoside triphosphate hydrolases"/>
    <property type="match status" value="1"/>
</dbReference>
<dbReference type="PROSITE" id="PS00301">
    <property type="entry name" value="G_TR_1"/>
    <property type="match status" value="1"/>
</dbReference>
<dbReference type="PROSITE" id="PS51722">
    <property type="entry name" value="G_TR_2"/>
    <property type="match status" value="1"/>
</dbReference>
<keyword id="KW-0997">Cell inner membrane</keyword>
<keyword id="KW-1003">Cell membrane</keyword>
<keyword id="KW-0342">GTP-binding</keyword>
<keyword id="KW-0378">Hydrolase</keyword>
<keyword id="KW-0472">Membrane</keyword>
<keyword id="KW-0547">Nucleotide-binding</keyword>
<keyword id="KW-0648">Protein biosynthesis</keyword>
<accession>A7ZCJ3</accession>
<sequence>MKNIRNFSIIAHIDHGKSTLADRLIQECGAVSDREMSSQIMDTMDIEKERGITIKAQSVRLNYALNGQNFVLNLIDTPGHVDFSYEVSRSLASCEGALLVVDASQGVEAQTIANVYIALENNLEIIPVINKIDLPAADPARVKDEIEHIIGLDCSGAIEVSAKTGVGIKELLEAIITRIPAPNGDVSKPTKALIYDSWFDNYLGALALVRVYDGEISKNDEILVMGTGKKHIVLDLMYPNPIAPIKTKTLSAGEVGIVVLGLKNVSDVQVGDTITQSRNPLKEPVGGFERAKPFVFAGLYPIETDKFEDLRDALDKLKLNDSSISYEPETSVALGFGFRVGFLGLLHMEVVKERLEREFDLDLIATAPTVTYEVIQTDGLNLKIQNPSQLPPVNKIDSILEPYVKATIITPSEFLGNIITLLNNRRGIQTKMDYITTDRVLLEYDIPMNEIVMDFYDKLKSSTKGYASFDYEPSDYRVGDLVKLDVKVAGETVDALSIIVPESKAQTKGRDFVKAMKEIVPRQLFEVAIQASIGNKIIARETVKSMGKNVTAKCYGGDITRKRKLLEKQKEGKKRMKAIGKVNLPQEAFLSVLKID</sequence>
<organism>
    <name type="scientific">Campylobacter concisus (strain 13826)</name>
    <dbReference type="NCBI Taxonomy" id="360104"/>
    <lineage>
        <taxon>Bacteria</taxon>
        <taxon>Pseudomonadati</taxon>
        <taxon>Campylobacterota</taxon>
        <taxon>Epsilonproteobacteria</taxon>
        <taxon>Campylobacterales</taxon>
        <taxon>Campylobacteraceae</taxon>
        <taxon>Campylobacter</taxon>
    </lineage>
</organism>
<name>LEPA_CAMC1</name>
<evidence type="ECO:0000255" key="1">
    <source>
        <dbReference type="HAMAP-Rule" id="MF_00071"/>
    </source>
</evidence>
<protein>
    <recommendedName>
        <fullName evidence="1">Elongation factor 4</fullName>
        <shortName evidence="1">EF-4</shortName>
        <ecNumber evidence="1">3.6.5.n1</ecNumber>
    </recommendedName>
    <alternativeName>
        <fullName evidence="1">Ribosomal back-translocase LepA</fullName>
    </alternativeName>
</protein>
<comment type="function">
    <text evidence="1">Required for accurate and efficient protein synthesis under certain stress conditions. May act as a fidelity factor of the translation reaction, by catalyzing a one-codon backward translocation of tRNAs on improperly translocated ribosomes. Back-translocation proceeds from a post-translocation (POST) complex to a pre-translocation (PRE) complex, thus giving elongation factor G a second chance to translocate the tRNAs correctly. Binds to ribosomes in a GTP-dependent manner.</text>
</comment>
<comment type="catalytic activity">
    <reaction evidence="1">
        <text>GTP + H2O = GDP + phosphate + H(+)</text>
        <dbReference type="Rhea" id="RHEA:19669"/>
        <dbReference type="ChEBI" id="CHEBI:15377"/>
        <dbReference type="ChEBI" id="CHEBI:15378"/>
        <dbReference type="ChEBI" id="CHEBI:37565"/>
        <dbReference type="ChEBI" id="CHEBI:43474"/>
        <dbReference type="ChEBI" id="CHEBI:58189"/>
        <dbReference type="EC" id="3.6.5.n1"/>
    </reaction>
</comment>
<comment type="subcellular location">
    <subcellularLocation>
        <location evidence="1">Cell inner membrane</location>
        <topology evidence="1">Peripheral membrane protein</topology>
        <orientation evidence="1">Cytoplasmic side</orientation>
    </subcellularLocation>
</comment>
<comment type="similarity">
    <text evidence="1">Belongs to the TRAFAC class translation factor GTPase superfamily. Classic translation factor GTPase family. LepA subfamily.</text>
</comment>
<gene>
    <name evidence="1" type="primary">lepA</name>
    <name type="ordered locus">Ccon26_06150</name>
    <name type="ORF">CCC13826_0855</name>
</gene>